<comment type="function">
    <text evidence="1">Required for accurate and efficient protein synthesis under certain stress conditions. May act as a fidelity factor of the translation reaction, by catalyzing a one-codon backward translocation of tRNAs on improperly translocated ribosomes. Back-translocation proceeds from a post-translocation (POST) complex to a pre-translocation (PRE) complex, thus giving elongation factor G a second chance to translocate the tRNAs correctly. Binds to ribosomes in a GTP-dependent manner.</text>
</comment>
<comment type="catalytic activity">
    <reaction evidence="1">
        <text>GTP + H2O = GDP + phosphate + H(+)</text>
        <dbReference type="Rhea" id="RHEA:19669"/>
        <dbReference type="ChEBI" id="CHEBI:15377"/>
        <dbReference type="ChEBI" id="CHEBI:15378"/>
        <dbReference type="ChEBI" id="CHEBI:37565"/>
        <dbReference type="ChEBI" id="CHEBI:43474"/>
        <dbReference type="ChEBI" id="CHEBI:58189"/>
        <dbReference type="EC" id="3.6.5.n1"/>
    </reaction>
</comment>
<comment type="subcellular location">
    <subcellularLocation>
        <location evidence="1">Cell inner membrane</location>
        <topology evidence="1">Peripheral membrane protein</topology>
        <orientation evidence="1">Cytoplasmic side</orientation>
    </subcellularLocation>
</comment>
<comment type="similarity">
    <text evidence="1">Belongs to the TRAFAC class translation factor GTPase superfamily. Classic translation factor GTPase family. LepA subfamily.</text>
</comment>
<keyword id="KW-0997">Cell inner membrane</keyword>
<keyword id="KW-1003">Cell membrane</keyword>
<keyword id="KW-0342">GTP-binding</keyword>
<keyword id="KW-0378">Hydrolase</keyword>
<keyword id="KW-0472">Membrane</keyword>
<keyword id="KW-0547">Nucleotide-binding</keyword>
<keyword id="KW-0648">Protein biosynthesis</keyword>
<proteinExistence type="inferred from homology"/>
<organism>
    <name type="scientific">Histophilus somni (strain 129Pt)</name>
    <name type="common">Haemophilus somnus</name>
    <dbReference type="NCBI Taxonomy" id="205914"/>
    <lineage>
        <taxon>Bacteria</taxon>
        <taxon>Pseudomonadati</taxon>
        <taxon>Pseudomonadota</taxon>
        <taxon>Gammaproteobacteria</taxon>
        <taxon>Pasteurellales</taxon>
        <taxon>Pasteurellaceae</taxon>
        <taxon>Histophilus</taxon>
    </lineage>
</organism>
<dbReference type="EC" id="3.6.5.n1" evidence="1"/>
<dbReference type="EMBL" id="CP000436">
    <property type="protein sequence ID" value="ABI25517.1"/>
    <property type="molecule type" value="Genomic_DNA"/>
</dbReference>
<dbReference type="SMR" id="Q0I4Z1"/>
<dbReference type="KEGG" id="hso:HS_1242"/>
<dbReference type="eggNOG" id="COG0481">
    <property type="taxonomic scope" value="Bacteria"/>
</dbReference>
<dbReference type="HOGENOM" id="CLU_009995_3_3_6"/>
<dbReference type="GO" id="GO:0005886">
    <property type="term" value="C:plasma membrane"/>
    <property type="evidence" value="ECO:0007669"/>
    <property type="project" value="UniProtKB-SubCell"/>
</dbReference>
<dbReference type="GO" id="GO:0005525">
    <property type="term" value="F:GTP binding"/>
    <property type="evidence" value="ECO:0007669"/>
    <property type="project" value="UniProtKB-UniRule"/>
</dbReference>
<dbReference type="GO" id="GO:0003924">
    <property type="term" value="F:GTPase activity"/>
    <property type="evidence" value="ECO:0007669"/>
    <property type="project" value="UniProtKB-UniRule"/>
</dbReference>
<dbReference type="GO" id="GO:0097216">
    <property type="term" value="F:guanosine tetraphosphate binding"/>
    <property type="evidence" value="ECO:0007669"/>
    <property type="project" value="UniProtKB-ARBA"/>
</dbReference>
<dbReference type="GO" id="GO:0043022">
    <property type="term" value="F:ribosome binding"/>
    <property type="evidence" value="ECO:0007669"/>
    <property type="project" value="UniProtKB-UniRule"/>
</dbReference>
<dbReference type="GO" id="GO:0003746">
    <property type="term" value="F:translation elongation factor activity"/>
    <property type="evidence" value="ECO:0007669"/>
    <property type="project" value="UniProtKB-UniRule"/>
</dbReference>
<dbReference type="GO" id="GO:0045727">
    <property type="term" value="P:positive regulation of translation"/>
    <property type="evidence" value="ECO:0007669"/>
    <property type="project" value="UniProtKB-UniRule"/>
</dbReference>
<dbReference type="CDD" id="cd03699">
    <property type="entry name" value="EF4_II"/>
    <property type="match status" value="1"/>
</dbReference>
<dbReference type="CDD" id="cd16260">
    <property type="entry name" value="EF4_III"/>
    <property type="match status" value="1"/>
</dbReference>
<dbReference type="CDD" id="cd01890">
    <property type="entry name" value="LepA"/>
    <property type="match status" value="1"/>
</dbReference>
<dbReference type="CDD" id="cd03709">
    <property type="entry name" value="lepA_C"/>
    <property type="match status" value="1"/>
</dbReference>
<dbReference type="FunFam" id="3.30.70.240:FF:000005">
    <property type="entry name" value="Elongation factor 4"/>
    <property type="match status" value="1"/>
</dbReference>
<dbReference type="FunFam" id="3.40.50.300:FF:000078">
    <property type="entry name" value="Elongation factor 4"/>
    <property type="match status" value="1"/>
</dbReference>
<dbReference type="FunFam" id="2.40.30.10:FF:000015">
    <property type="entry name" value="Translation factor GUF1, mitochondrial"/>
    <property type="match status" value="1"/>
</dbReference>
<dbReference type="FunFam" id="3.30.70.2570:FF:000001">
    <property type="entry name" value="Translation factor GUF1, mitochondrial"/>
    <property type="match status" value="1"/>
</dbReference>
<dbReference type="FunFam" id="3.30.70.870:FF:000004">
    <property type="entry name" value="Translation factor GUF1, mitochondrial"/>
    <property type="match status" value="1"/>
</dbReference>
<dbReference type="Gene3D" id="3.30.70.240">
    <property type="match status" value="1"/>
</dbReference>
<dbReference type="Gene3D" id="3.30.70.2570">
    <property type="entry name" value="Elongation factor 4, C-terminal domain"/>
    <property type="match status" value="1"/>
</dbReference>
<dbReference type="Gene3D" id="3.30.70.870">
    <property type="entry name" value="Elongation Factor G (Translational Gtpase), domain 3"/>
    <property type="match status" value="1"/>
</dbReference>
<dbReference type="Gene3D" id="3.40.50.300">
    <property type="entry name" value="P-loop containing nucleotide triphosphate hydrolases"/>
    <property type="match status" value="1"/>
</dbReference>
<dbReference type="Gene3D" id="2.40.30.10">
    <property type="entry name" value="Translation factors"/>
    <property type="match status" value="1"/>
</dbReference>
<dbReference type="HAMAP" id="MF_00071">
    <property type="entry name" value="LepA"/>
    <property type="match status" value="1"/>
</dbReference>
<dbReference type="InterPro" id="IPR006297">
    <property type="entry name" value="EF-4"/>
</dbReference>
<dbReference type="InterPro" id="IPR035647">
    <property type="entry name" value="EFG_III/V"/>
</dbReference>
<dbReference type="InterPro" id="IPR000640">
    <property type="entry name" value="EFG_V-like"/>
</dbReference>
<dbReference type="InterPro" id="IPR004161">
    <property type="entry name" value="EFTu-like_2"/>
</dbReference>
<dbReference type="InterPro" id="IPR031157">
    <property type="entry name" value="G_TR_CS"/>
</dbReference>
<dbReference type="InterPro" id="IPR038363">
    <property type="entry name" value="LepA_C_sf"/>
</dbReference>
<dbReference type="InterPro" id="IPR013842">
    <property type="entry name" value="LepA_CTD"/>
</dbReference>
<dbReference type="InterPro" id="IPR035654">
    <property type="entry name" value="LepA_IV"/>
</dbReference>
<dbReference type="InterPro" id="IPR027417">
    <property type="entry name" value="P-loop_NTPase"/>
</dbReference>
<dbReference type="InterPro" id="IPR005225">
    <property type="entry name" value="Small_GTP-bd"/>
</dbReference>
<dbReference type="InterPro" id="IPR000795">
    <property type="entry name" value="T_Tr_GTP-bd_dom"/>
</dbReference>
<dbReference type="NCBIfam" id="TIGR01393">
    <property type="entry name" value="lepA"/>
    <property type="match status" value="1"/>
</dbReference>
<dbReference type="NCBIfam" id="TIGR00231">
    <property type="entry name" value="small_GTP"/>
    <property type="match status" value="1"/>
</dbReference>
<dbReference type="PANTHER" id="PTHR43512:SF4">
    <property type="entry name" value="TRANSLATION FACTOR GUF1 HOMOLOG, CHLOROPLASTIC"/>
    <property type="match status" value="1"/>
</dbReference>
<dbReference type="PANTHER" id="PTHR43512">
    <property type="entry name" value="TRANSLATION FACTOR GUF1-RELATED"/>
    <property type="match status" value="1"/>
</dbReference>
<dbReference type="Pfam" id="PF00679">
    <property type="entry name" value="EFG_C"/>
    <property type="match status" value="1"/>
</dbReference>
<dbReference type="Pfam" id="PF00009">
    <property type="entry name" value="GTP_EFTU"/>
    <property type="match status" value="1"/>
</dbReference>
<dbReference type="Pfam" id="PF03144">
    <property type="entry name" value="GTP_EFTU_D2"/>
    <property type="match status" value="1"/>
</dbReference>
<dbReference type="Pfam" id="PF06421">
    <property type="entry name" value="LepA_C"/>
    <property type="match status" value="1"/>
</dbReference>
<dbReference type="PRINTS" id="PR00315">
    <property type="entry name" value="ELONGATNFCT"/>
</dbReference>
<dbReference type="SUPFAM" id="SSF54980">
    <property type="entry name" value="EF-G C-terminal domain-like"/>
    <property type="match status" value="2"/>
</dbReference>
<dbReference type="SUPFAM" id="SSF52540">
    <property type="entry name" value="P-loop containing nucleoside triphosphate hydrolases"/>
    <property type="match status" value="1"/>
</dbReference>
<dbReference type="PROSITE" id="PS00301">
    <property type="entry name" value="G_TR_1"/>
    <property type="match status" value="1"/>
</dbReference>
<dbReference type="PROSITE" id="PS51722">
    <property type="entry name" value="G_TR_2"/>
    <property type="match status" value="1"/>
</dbReference>
<accession>Q0I4Z1</accession>
<reference key="1">
    <citation type="journal article" date="2007" name="J. Bacteriol.">
        <title>Complete genome sequence of Haemophilus somnus (Histophilus somni) strain 129Pt and comparison to Haemophilus ducreyi 35000HP and Haemophilus influenzae Rd.</title>
        <authorList>
            <person name="Challacombe J.F."/>
            <person name="Duncan A.J."/>
            <person name="Brettin T.S."/>
            <person name="Bruce D."/>
            <person name="Chertkov O."/>
            <person name="Detter J.C."/>
            <person name="Han C.S."/>
            <person name="Misra M."/>
            <person name="Richardson P."/>
            <person name="Tapia R."/>
            <person name="Thayer N."/>
            <person name="Xie G."/>
            <person name="Inzana T.J."/>
        </authorList>
    </citation>
    <scope>NUCLEOTIDE SEQUENCE [LARGE SCALE GENOMIC DNA]</scope>
    <source>
        <strain>129Pt</strain>
    </source>
</reference>
<sequence>MKNIRNFSIIAHIDHGKSTLSDRLIQSCGGLSDREMEAQVLDSMDLERERGITIKAQSVTLNYRAKDGETYQLNFIDTPGHVDFSYEVSRSLAACEGALLVVDAGQGVEAQTLANCYTAIEMDLEVVPILNKIDLPAAEPERVAEEIEDIVGIDAIDAVRCSAKTGVGIEDVLEEIVRKIPAPEGDPNAPLQALIIDSWFDNYLGVVSLVRVKNGILRKGDKIKVMSTGQSYNVDRLGIFTPKQVDTTELKTGEVGWLVCAIKDILGAPVGDTLTSHHNPATSVLPGFKKVKPQVYAGLFPISSDDYESFRDALGKLSLNDASLFYEPENSTALGFGFRCGFLGLLHMEIIQERLEREYDLDLITTAPTVVYEVEQTNGEVIYVDSPAKLPPLNNIAEIREPIAECNMLLPQSYLGNVITLCVEKRGVQTNMVYHGNQVALTYEIPMGEVVLDFFDRLKSTSRGYASLDYGFKRFQAADMVRVDIMINGERVDALALIVHKDNAQYRGRELVEKMRELIPRQQFDIAIQAAIGNHIIARSTVKQLRKNVLAKCYGGDVSRKKKLLQKQKEGKKRMKSLGNVEVPQEAFLAILHVGKDK</sequence>
<protein>
    <recommendedName>
        <fullName evidence="1">Elongation factor 4</fullName>
        <shortName evidence="1">EF-4</shortName>
        <ecNumber evidence="1">3.6.5.n1</ecNumber>
    </recommendedName>
    <alternativeName>
        <fullName evidence="1">Ribosomal back-translocase LepA</fullName>
    </alternativeName>
</protein>
<gene>
    <name evidence="1" type="primary">lepA</name>
    <name type="ordered locus">HS_1242</name>
</gene>
<name>LEPA_HISS1</name>
<evidence type="ECO:0000255" key="1">
    <source>
        <dbReference type="HAMAP-Rule" id="MF_00071"/>
    </source>
</evidence>
<feature type="chain" id="PRO_0000265663" description="Elongation factor 4">
    <location>
        <begin position="1"/>
        <end position="598"/>
    </location>
</feature>
<feature type="domain" description="tr-type G">
    <location>
        <begin position="2"/>
        <end position="184"/>
    </location>
</feature>
<feature type="binding site" evidence="1">
    <location>
        <begin position="14"/>
        <end position="19"/>
    </location>
    <ligand>
        <name>GTP</name>
        <dbReference type="ChEBI" id="CHEBI:37565"/>
    </ligand>
</feature>
<feature type="binding site" evidence="1">
    <location>
        <begin position="131"/>
        <end position="134"/>
    </location>
    <ligand>
        <name>GTP</name>
        <dbReference type="ChEBI" id="CHEBI:37565"/>
    </ligand>
</feature>